<proteinExistence type="inferred from homology"/>
<protein>
    <recommendedName>
        <fullName evidence="1">Aspartyl/glutamyl-tRNA(Asn/Gln) amidotransferase subunit B</fullName>
        <shortName evidence="1">Asp/Glu-ADT subunit B</shortName>
        <ecNumber evidence="1">6.3.5.-</ecNumber>
    </recommendedName>
</protein>
<accession>A5IMT3</accession>
<keyword id="KW-0067">ATP-binding</keyword>
<keyword id="KW-0436">Ligase</keyword>
<keyword id="KW-0547">Nucleotide-binding</keyword>
<keyword id="KW-0648">Protein biosynthesis</keyword>
<dbReference type="EC" id="6.3.5.-" evidence="1"/>
<dbReference type="EMBL" id="CP000702">
    <property type="protein sequence ID" value="ABQ47506.1"/>
    <property type="molecule type" value="Genomic_DNA"/>
</dbReference>
<dbReference type="RefSeq" id="WP_011943933.1">
    <property type="nucleotide sequence ID" value="NC_009486.1"/>
</dbReference>
<dbReference type="SMR" id="A5IMT3"/>
<dbReference type="STRING" id="390874.Tpet_1498"/>
<dbReference type="KEGG" id="tpt:Tpet_1498"/>
<dbReference type="eggNOG" id="COG0064">
    <property type="taxonomic scope" value="Bacteria"/>
</dbReference>
<dbReference type="HOGENOM" id="CLU_019240_0_0_0"/>
<dbReference type="Proteomes" id="UP000006558">
    <property type="component" value="Chromosome"/>
</dbReference>
<dbReference type="GO" id="GO:0050566">
    <property type="term" value="F:asparaginyl-tRNA synthase (glutamine-hydrolyzing) activity"/>
    <property type="evidence" value="ECO:0007669"/>
    <property type="project" value="RHEA"/>
</dbReference>
<dbReference type="GO" id="GO:0005524">
    <property type="term" value="F:ATP binding"/>
    <property type="evidence" value="ECO:0007669"/>
    <property type="project" value="UniProtKB-KW"/>
</dbReference>
<dbReference type="GO" id="GO:0050567">
    <property type="term" value="F:glutaminyl-tRNA synthase (glutamine-hydrolyzing) activity"/>
    <property type="evidence" value="ECO:0007669"/>
    <property type="project" value="UniProtKB-UniRule"/>
</dbReference>
<dbReference type="GO" id="GO:0070681">
    <property type="term" value="P:glutaminyl-tRNAGln biosynthesis via transamidation"/>
    <property type="evidence" value="ECO:0007669"/>
    <property type="project" value="TreeGrafter"/>
</dbReference>
<dbReference type="GO" id="GO:0006412">
    <property type="term" value="P:translation"/>
    <property type="evidence" value="ECO:0007669"/>
    <property type="project" value="UniProtKB-UniRule"/>
</dbReference>
<dbReference type="FunFam" id="1.10.10.410:FF:000001">
    <property type="entry name" value="Aspartyl/glutamyl-tRNA(Asn/Gln) amidotransferase subunit B"/>
    <property type="match status" value="1"/>
</dbReference>
<dbReference type="FunFam" id="1.10.150.380:FF:000001">
    <property type="entry name" value="Aspartyl/glutamyl-tRNA(Asn/Gln) amidotransferase subunit B"/>
    <property type="match status" value="1"/>
</dbReference>
<dbReference type="Gene3D" id="1.10.10.410">
    <property type="match status" value="1"/>
</dbReference>
<dbReference type="Gene3D" id="1.10.150.380">
    <property type="entry name" value="GatB domain, N-terminal subdomain"/>
    <property type="match status" value="1"/>
</dbReference>
<dbReference type="HAMAP" id="MF_00121">
    <property type="entry name" value="GatB"/>
    <property type="match status" value="1"/>
</dbReference>
<dbReference type="InterPro" id="IPR017959">
    <property type="entry name" value="Asn/Gln-tRNA_amidoTrfase_suB/E"/>
</dbReference>
<dbReference type="InterPro" id="IPR006075">
    <property type="entry name" value="Asn/Gln-tRNA_Trfase_suB/E_cat"/>
</dbReference>
<dbReference type="InterPro" id="IPR018027">
    <property type="entry name" value="Asn/Gln_amidotransferase"/>
</dbReference>
<dbReference type="InterPro" id="IPR003789">
    <property type="entry name" value="Asn/Gln_tRNA_amidoTrase-B-like"/>
</dbReference>
<dbReference type="InterPro" id="IPR004413">
    <property type="entry name" value="GatB"/>
</dbReference>
<dbReference type="InterPro" id="IPR042114">
    <property type="entry name" value="GatB_C_1"/>
</dbReference>
<dbReference type="InterPro" id="IPR023168">
    <property type="entry name" value="GatB_Yqey_C_2"/>
</dbReference>
<dbReference type="InterPro" id="IPR017958">
    <property type="entry name" value="Gln-tRNA_amidoTrfase_suB_CS"/>
</dbReference>
<dbReference type="InterPro" id="IPR014746">
    <property type="entry name" value="Gln_synth/guanido_kin_cat_dom"/>
</dbReference>
<dbReference type="NCBIfam" id="TIGR00133">
    <property type="entry name" value="gatB"/>
    <property type="match status" value="1"/>
</dbReference>
<dbReference type="NCBIfam" id="NF004012">
    <property type="entry name" value="PRK05477.1-2"/>
    <property type="match status" value="1"/>
</dbReference>
<dbReference type="NCBIfam" id="NF004014">
    <property type="entry name" value="PRK05477.1-4"/>
    <property type="match status" value="1"/>
</dbReference>
<dbReference type="PANTHER" id="PTHR11659">
    <property type="entry name" value="GLUTAMYL-TRNA GLN AMIDOTRANSFERASE SUBUNIT B MITOCHONDRIAL AND PROKARYOTIC PET112-RELATED"/>
    <property type="match status" value="1"/>
</dbReference>
<dbReference type="PANTHER" id="PTHR11659:SF0">
    <property type="entry name" value="GLUTAMYL-TRNA(GLN) AMIDOTRANSFERASE SUBUNIT B, MITOCHONDRIAL"/>
    <property type="match status" value="1"/>
</dbReference>
<dbReference type="Pfam" id="PF02934">
    <property type="entry name" value="GatB_N"/>
    <property type="match status" value="1"/>
</dbReference>
<dbReference type="Pfam" id="PF02637">
    <property type="entry name" value="GatB_Yqey"/>
    <property type="match status" value="1"/>
</dbReference>
<dbReference type="SMART" id="SM00845">
    <property type="entry name" value="GatB_Yqey"/>
    <property type="match status" value="1"/>
</dbReference>
<dbReference type="SUPFAM" id="SSF89095">
    <property type="entry name" value="GatB/YqeY motif"/>
    <property type="match status" value="1"/>
</dbReference>
<dbReference type="SUPFAM" id="SSF55931">
    <property type="entry name" value="Glutamine synthetase/guanido kinase"/>
    <property type="match status" value="1"/>
</dbReference>
<dbReference type="PROSITE" id="PS01234">
    <property type="entry name" value="GATB"/>
    <property type="match status" value="1"/>
</dbReference>
<organism>
    <name type="scientific">Thermotoga petrophila (strain ATCC BAA-488 / DSM 13995 / JCM 10881 / RKU-1)</name>
    <dbReference type="NCBI Taxonomy" id="390874"/>
    <lineage>
        <taxon>Bacteria</taxon>
        <taxon>Thermotogati</taxon>
        <taxon>Thermotogota</taxon>
        <taxon>Thermotogae</taxon>
        <taxon>Thermotogales</taxon>
        <taxon>Thermotogaceae</taxon>
        <taxon>Thermotoga</taxon>
    </lineage>
</organism>
<sequence length="482" mass="55454">MRYRPVIGLEIHVQLSTKTKAFCSCPADVFELPPNTAICPVCTGQPGALPVPNEEMIRFAVKTALALNCKIHKYSRFDRKNYFYPDLPKGYQISQYFYPIATEGFLEIDGDEGRKKVRIRRLHLEEDAGKLVHEGDSITRASYSLVDMNRCGVPLIEIVTEPDISSPREARVFMEKLRSIVRYLGVSTGDMEKGALRCDANISVVDTETGRQSNRVEVKNMNSFRFVEKALEYEFERIVKAMERGEDVERETRGWDMTTKTTVSMRGKEEESDYRYFPEPDIPPVVLSDEYLEEVKKELPELPDEKAKRFMREYDLPEYDAKVLTSSKELAEFFEECVKVVNRPKDLSNWIMTEVLRELNERNIEITESKLTPQHFADLFKLMDEGKISIKIAKEIFPEVFETGKMPSQIVEEKGLVQISDEKLIEELVKKAMEQNPKAVQDYKSGKKKAAGFFVGYVMRETKGKANPELTNRIIQKLLEGE</sequence>
<feature type="chain" id="PRO_1000071379" description="Aspartyl/glutamyl-tRNA(Asn/Gln) amidotransferase subunit B">
    <location>
        <begin position="1"/>
        <end position="482"/>
    </location>
</feature>
<evidence type="ECO:0000255" key="1">
    <source>
        <dbReference type="HAMAP-Rule" id="MF_00121"/>
    </source>
</evidence>
<name>GATB_THEP1</name>
<comment type="function">
    <text evidence="1">Allows the formation of correctly charged Asn-tRNA(Asn) or Gln-tRNA(Gln) through the transamidation of misacylated Asp-tRNA(Asn) or Glu-tRNA(Gln) in organisms which lack either or both of asparaginyl-tRNA or glutaminyl-tRNA synthetases. The reaction takes place in the presence of glutamine and ATP through an activated phospho-Asp-tRNA(Asn) or phospho-Glu-tRNA(Gln).</text>
</comment>
<comment type="catalytic activity">
    <reaction evidence="1">
        <text>L-glutamyl-tRNA(Gln) + L-glutamine + ATP + H2O = L-glutaminyl-tRNA(Gln) + L-glutamate + ADP + phosphate + H(+)</text>
        <dbReference type="Rhea" id="RHEA:17521"/>
        <dbReference type="Rhea" id="RHEA-COMP:9681"/>
        <dbReference type="Rhea" id="RHEA-COMP:9684"/>
        <dbReference type="ChEBI" id="CHEBI:15377"/>
        <dbReference type="ChEBI" id="CHEBI:15378"/>
        <dbReference type="ChEBI" id="CHEBI:29985"/>
        <dbReference type="ChEBI" id="CHEBI:30616"/>
        <dbReference type="ChEBI" id="CHEBI:43474"/>
        <dbReference type="ChEBI" id="CHEBI:58359"/>
        <dbReference type="ChEBI" id="CHEBI:78520"/>
        <dbReference type="ChEBI" id="CHEBI:78521"/>
        <dbReference type="ChEBI" id="CHEBI:456216"/>
    </reaction>
</comment>
<comment type="catalytic activity">
    <reaction evidence="1">
        <text>L-aspartyl-tRNA(Asn) + L-glutamine + ATP + H2O = L-asparaginyl-tRNA(Asn) + L-glutamate + ADP + phosphate + 2 H(+)</text>
        <dbReference type="Rhea" id="RHEA:14513"/>
        <dbReference type="Rhea" id="RHEA-COMP:9674"/>
        <dbReference type="Rhea" id="RHEA-COMP:9677"/>
        <dbReference type="ChEBI" id="CHEBI:15377"/>
        <dbReference type="ChEBI" id="CHEBI:15378"/>
        <dbReference type="ChEBI" id="CHEBI:29985"/>
        <dbReference type="ChEBI" id="CHEBI:30616"/>
        <dbReference type="ChEBI" id="CHEBI:43474"/>
        <dbReference type="ChEBI" id="CHEBI:58359"/>
        <dbReference type="ChEBI" id="CHEBI:78515"/>
        <dbReference type="ChEBI" id="CHEBI:78516"/>
        <dbReference type="ChEBI" id="CHEBI:456216"/>
    </reaction>
</comment>
<comment type="subunit">
    <text evidence="1">Heterotrimer of A, B and C subunits.</text>
</comment>
<comment type="similarity">
    <text evidence="1">Belongs to the GatB/GatE family. GatB subfamily.</text>
</comment>
<gene>
    <name evidence="1" type="primary">gatB</name>
    <name type="ordered locus">Tpet_1498</name>
</gene>
<reference key="1">
    <citation type="submission" date="2007-05" db="EMBL/GenBank/DDBJ databases">
        <title>Complete sequence of Thermotoga petrophila RKU-1.</title>
        <authorList>
            <consortium name="US DOE Joint Genome Institute"/>
            <person name="Copeland A."/>
            <person name="Lucas S."/>
            <person name="Lapidus A."/>
            <person name="Barry K."/>
            <person name="Glavina del Rio T."/>
            <person name="Dalin E."/>
            <person name="Tice H."/>
            <person name="Pitluck S."/>
            <person name="Sims D."/>
            <person name="Brettin T."/>
            <person name="Bruce D."/>
            <person name="Detter J.C."/>
            <person name="Han C."/>
            <person name="Tapia R."/>
            <person name="Schmutz J."/>
            <person name="Larimer F."/>
            <person name="Land M."/>
            <person name="Hauser L."/>
            <person name="Kyrpides N."/>
            <person name="Mikhailova N."/>
            <person name="Nelson K."/>
            <person name="Gogarten J.P."/>
            <person name="Noll K."/>
            <person name="Richardson P."/>
        </authorList>
    </citation>
    <scope>NUCLEOTIDE SEQUENCE [LARGE SCALE GENOMIC DNA]</scope>
    <source>
        <strain>ATCC BAA-488 / DSM 13995 / JCM 10881 / RKU-1</strain>
    </source>
</reference>